<accession>P0C1C9</accession>
<sequence>ACKPKNNLCAITEMAECCSGFCLIYRCS</sequence>
<comment type="function">
    <text evidence="1">Gamma-conotoxins may act on voltage-gated non-specific cation pacemaker channels (HCN).</text>
</comment>
<comment type="subcellular location">
    <subcellularLocation>
        <location>Secreted</location>
    </subcellularLocation>
</comment>
<comment type="tissue specificity">
    <text>Expressed by the venom duct.</text>
</comment>
<comment type="domain">
    <text evidence="1">The presence of a 'disulfide through disulfide knot' structurally defines this protein as a knottin.</text>
</comment>
<comment type="domain">
    <text>The cysteine framework is VI/VII (C-C-CC-C-C).</text>
</comment>
<comment type="mass spectrometry"/>
<comment type="mass spectrometry">
    <text>Decarboxylated.</text>
</comment>
<comment type="similarity">
    <text evidence="3">Belongs to the conotoxin O1 superfamily.</text>
</comment>
<keyword id="KW-0027">Amidation</keyword>
<keyword id="KW-0903">Direct protein sequencing</keyword>
<keyword id="KW-1015">Disulfide bond</keyword>
<keyword id="KW-0301">Gamma-carboxyglutamic acid</keyword>
<keyword id="KW-0379">Hydroxylation</keyword>
<keyword id="KW-0872">Ion channel impairing toxin</keyword>
<keyword id="KW-0960">Knottin</keyword>
<keyword id="KW-0528">Neurotoxin</keyword>
<keyword id="KW-0964">Secreted</keyword>
<keyword id="KW-0800">Toxin</keyword>
<feature type="peptide" id="PRO_0000234828" description="Gamma-conotoxin-like de7a">
    <location>
        <begin position="1"/>
        <end position="28"/>
    </location>
</feature>
<feature type="modified residue" description="4-hydroxyproline" evidence="2">
    <location>
        <position position="4"/>
    </location>
</feature>
<feature type="modified residue" description="4-carboxyglutamate" evidence="2">
    <location>
        <position position="13"/>
    </location>
</feature>
<feature type="modified residue" description="4-carboxyglutamate" evidence="2">
    <location>
        <position position="16"/>
    </location>
</feature>
<feature type="modified residue" description="Serine amide" evidence="2">
    <location>
        <position position="28"/>
    </location>
</feature>
<feature type="disulfide bond" evidence="1">
    <location>
        <begin position="2"/>
        <end position="18"/>
    </location>
</feature>
<feature type="disulfide bond" evidence="1">
    <location>
        <begin position="9"/>
        <end position="22"/>
    </location>
</feature>
<feature type="disulfide bond" evidence="1">
    <location>
        <begin position="17"/>
        <end position="27"/>
    </location>
</feature>
<organism>
    <name type="scientific">Conasprella delessertii</name>
    <name type="common">Sozon's cone</name>
    <name type="synonym">Conus delessertii</name>
    <dbReference type="NCBI Taxonomy" id="2547900"/>
    <lineage>
        <taxon>Eukaryota</taxon>
        <taxon>Metazoa</taxon>
        <taxon>Spiralia</taxon>
        <taxon>Lophotrochozoa</taxon>
        <taxon>Mollusca</taxon>
        <taxon>Gastropoda</taxon>
        <taxon>Caenogastropoda</taxon>
        <taxon>Neogastropoda</taxon>
        <taxon>Conoidea</taxon>
        <taxon>Conidae</taxon>
        <taxon>Conasprella</taxon>
        <taxon>Kohniconus</taxon>
    </lineage>
</organism>
<evidence type="ECO:0000250" key="1"/>
<evidence type="ECO:0000269" key="2">
    <source>
    </source>
</evidence>
<evidence type="ECO:0000305" key="3"/>
<proteinExistence type="evidence at protein level"/>
<protein>
    <recommendedName>
        <fullName>Gamma-conotoxin-like de7a</fullName>
    </recommendedName>
</protein>
<dbReference type="SMR" id="P0C1C9"/>
<dbReference type="ConoServer" id="1496">
    <property type="toxin name" value="DeVIIA"/>
</dbReference>
<dbReference type="GO" id="GO:0005576">
    <property type="term" value="C:extracellular region"/>
    <property type="evidence" value="ECO:0007669"/>
    <property type="project" value="UniProtKB-SubCell"/>
</dbReference>
<dbReference type="GO" id="GO:0099106">
    <property type="term" value="F:ion channel regulator activity"/>
    <property type="evidence" value="ECO:0007669"/>
    <property type="project" value="UniProtKB-KW"/>
</dbReference>
<dbReference type="GO" id="GO:0090729">
    <property type="term" value="F:toxin activity"/>
    <property type="evidence" value="ECO:0007669"/>
    <property type="project" value="UniProtKB-KW"/>
</dbReference>
<reference key="1">
    <citation type="journal article" date="2005" name="Peptides">
        <title>Putative gamma-conotoxins in vermivorous cone snails: the case of Conus delessertii.</title>
        <authorList>
            <person name="Aguilar M.B."/>
            <person name="Lopez-Vera E."/>
            <person name="Imperial J.S."/>
            <person name="Falcon A."/>
            <person name="Olivera B.M."/>
            <person name="de la Cotera E.P."/>
        </authorList>
    </citation>
    <scope>PROTEIN SEQUENCE</scope>
    <scope>HYDROXYLATION AT PRO-4</scope>
    <scope>GAMMA-CARBOXYGLUTAMATION AT GLU-13 AND GLU-16</scope>
    <scope>AMIDATION AT SER-28</scope>
    <scope>MASS SPECTROMETRY</scope>
    <source>
        <tissue>Venom</tissue>
    </source>
</reference>
<name>O17A_CONDE</name>